<feature type="chain" id="PRO_0000386668" description="Uncharacterized membrane protein YoyJ">
    <location>
        <begin position="1"/>
        <end position="83"/>
    </location>
</feature>
<feature type="transmembrane region" description="Helical" evidence="1">
    <location>
        <begin position="23"/>
        <end position="43"/>
    </location>
</feature>
<feature type="transmembrane region" description="Helical" evidence="1">
    <location>
        <begin position="56"/>
        <end position="76"/>
    </location>
</feature>
<proteinExistence type="predicted"/>
<reference key="1">
    <citation type="journal article" date="1997" name="Nature">
        <title>The complete genome sequence of the Gram-positive bacterium Bacillus subtilis.</title>
        <authorList>
            <person name="Kunst F."/>
            <person name="Ogasawara N."/>
            <person name="Moszer I."/>
            <person name="Albertini A.M."/>
            <person name="Alloni G."/>
            <person name="Azevedo V."/>
            <person name="Bertero M.G."/>
            <person name="Bessieres P."/>
            <person name="Bolotin A."/>
            <person name="Borchert S."/>
            <person name="Borriss R."/>
            <person name="Boursier L."/>
            <person name="Brans A."/>
            <person name="Braun M."/>
            <person name="Brignell S.C."/>
            <person name="Bron S."/>
            <person name="Brouillet S."/>
            <person name="Bruschi C.V."/>
            <person name="Caldwell B."/>
            <person name="Capuano V."/>
            <person name="Carter N.M."/>
            <person name="Choi S.-K."/>
            <person name="Codani J.-J."/>
            <person name="Connerton I.F."/>
            <person name="Cummings N.J."/>
            <person name="Daniel R.A."/>
            <person name="Denizot F."/>
            <person name="Devine K.M."/>
            <person name="Duesterhoeft A."/>
            <person name="Ehrlich S.D."/>
            <person name="Emmerson P.T."/>
            <person name="Entian K.-D."/>
            <person name="Errington J."/>
            <person name="Fabret C."/>
            <person name="Ferrari E."/>
            <person name="Foulger D."/>
            <person name="Fritz C."/>
            <person name="Fujita M."/>
            <person name="Fujita Y."/>
            <person name="Fuma S."/>
            <person name="Galizzi A."/>
            <person name="Galleron N."/>
            <person name="Ghim S.-Y."/>
            <person name="Glaser P."/>
            <person name="Goffeau A."/>
            <person name="Golightly E.J."/>
            <person name="Grandi G."/>
            <person name="Guiseppi G."/>
            <person name="Guy B.J."/>
            <person name="Haga K."/>
            <person name="Haiech J."/>
            <person name="Harwood C.R."/>
            <person name="Henaut A."/>
            <person name="Hilbert H."/>
            <person name="Holsappel S."/>
            <person name="Hosono S."/>
            <person name="Hullo M.-F."/>
            <person name="Itaya M."/>
            <person name="Jones L.-M."/>
            <person name="Joris B."/>
            <person name="Karamata D."/>
            <person name="Kasahara Y."/>
            <person name="Klaerr-Blanchard M."/>
            <person name="Klein C."/>
            <person name="Kobayashi Y."/>
            <person name="Koetter P."/>
            <person name="Koningstein G."/>
            <person name="Krogh S."/>
            <person name="Kumano M."/>
            <person name="Kurita K."/>
            <person name="Lapidus A."/>
            <person name="Lardinois S."/>
            <person name="Lauber J."/>
            <person name="Lazarevic V."/>
            <person name="Lee S.-M."/>
            <person name="Levine A."/>
            <person name="Liu H."/>
            <person name="Masuda S."/>
            <person name="Mauel C."/>
            <person name="Medigue C."/>
            <person name="Medina N."/>
            <person name="Mellado R.P."/>
            <person name="Mizuno M."/>
            <person name="Moestl D."/>
            <person name="Nakai S."/>
            <person name="Noback M."/>
            <person name="Noone D."/>
            <person name="O'Reilly M."/>
            <person name="Ogawa K."/>
            <person name="Ogiwara A."/>
            <person name="Oudega B."/>
            <person name="Park S.-H."/>
            <person name="Parro V."/>
            <person name="Pohl T.M."/>
            <person name="Portetelle D."/>
            <person name="Porwollik S."/>
            <person name="Prescott A.M."/>
            <person name="Presecan E."/>
            <person name="Pujic P."/>
            <person name="Purnelle B."/>
            <person name="Rapoport G."/>
            <person name="Rey M."/>
            <person name="Reynolds S."/>
            <person name="Rieger M."/>
            <person name="Rivolta C."/>
            <person name="Rocha E."/>
            <person name="Roche B."/>
            <person name="Rose M."/>
            <person name="Sadaie Y."/>
            <person name="Sato T."/>
            <person name="Scanlan E."/>
            <person name="Schleich S."/>
            <person name="Schroeter R."/>
            <person name="Scoffone F."/>
            <person name="Sekiguchi J."/>
            <person name="Sekowska A."/>
            <person name="Seror S.J."/>
            <person name="Serror P."/>
            <person name="Shin B.-S."/>
            <person name="Soldo B."/>
            <person name="Sorokin A."/>
            <person name="Tacconi E."/>
            <person name="Takagi T."/>
            <person name="Takahashi H."/>
            <person name="Takemaru K."/>
            <person name="Takeuchi M."/>
            <person name="Tamakoshi A."/>
            <person name="Tanaka T."/>
            <person name="Terpstra P."/>
            <person name="Tognoni A."/>
            <person name="Tosato V."/>
            <person name="Uchiyama S."/>
            <person name="Vandenbol M."/>
            <person name="Vannier F."/>
            <person name="Vassarotti A."/>
            <person name="Viari A."/>
            <person name="Wambutt R."/>
            <person name="Wedler E."/>
            <person name="Wedler H."/>
            <person name="Weitzenegger T."/>
            <person name="Winters P."/>
            <person name="Wipat A."/>
            <person name="Yamamoto H."/>
            <person name="Yamane K."/>
            <person name="Yasumoto K."/>
            <person name="Yata K."/>
            <person name="Yoshida K."/>
            <person name="Yoshikawa H.-F."/>
            <person name="Zumstein E."/>
            <person name="Yoshikawa H."/>
            <person name="Danchin A."/>
        </authorList>
    </citation>
    <scope>NUCLEOTIDE SEQUENCE [LARGE SCALE GENOMIC DNA]</scope>
    <source>
        <strain>168</strain>
    </source>
</reference>
<keyword id="KW-1003">Cell membrane</keyword>
<keyword id="KW-0472">Membrane</keyword>
<keyword id="KW-1185">Reference proteome</keyword>
<keyword id="KW-0812">Transmembrane</keyword>
<keyword id="KW-1133">Transmembrane helix</keyword>
<protein>
    <recommendedName>
        <fullName>Uncharacterized membrane protein YoyJ</fullName>
    </recommendedName>
</protein>
<accession>C0H439</accession>
<gene>
    <name type="primary">yoyJ</name>
    <name type="ordered locus">BSU20999</name>
</gene>
<comment type="subcellular location">
    <subcellularLocation>
        <location evidence="2">Cell membrane</location>
        <topology evidence="2">Multi-pass membrane protein</topology>
    </subcellularLocation>
</comment>
<evidence type="ECO:0000255" key="1"/>
<evidence type="ECO:0000305" key="2"/>
<dbReference type="EMBL" id="AL009126">
    <property type="protein sequence ID" value="CAX52647.1"/>
    <property type="molecule type" value="Genomic_DNA"/>
</dbReference>
<dbReference type="RefSeq" id="WP_010886546.1">
    <property type="nucleotide sequence ID" value="NZ_OZ025638.1"/>
</dbReference>
<dbReference type="RefSeq" id="YP_003097750.1">
    <property type="nucleotide sequence ID" value="NC_000964.3"/>
</dbReference>
<dbReference type="SMR" id="C0H439"/>
<dbReference type="STRING" id="224308.BSU20999"/>
<dbReference type="PaxDb" id="224308-BSU20999"/>
<dbReference type="EnsemblBacteria" id="CAX52647">
    <property type="protein sequence ID" value="CAX52647"/>
    <property type="gene ID" value="BSU_20999"/>
</dbReference>
<dbReference type="GeneID" id="8303210"/>
<dbReference type="KEGG" id="bsu:BSU20999"/>
<dbReference type="InParanoid" id="C0H439"/>
<dbReference type="OrthoDB" id="2897105at2"/>
<dbReference type="BioCyc" id="BSUB:BSU20999-MONOMER"/>
<dbReference type="Proteomes" id="UP000001570">
    <property type="component" value="Chromosome"/>
</dbReference>
<dbReference type="GO" id="GO:0005886">
    <property type="term" value="C:plasma membrane"/>
    <property type="evidence" value="ECO:0007669"/>
    <property type="project" value="UniProtKB-SubCell"/>
</dbReference>
<organism>
    <name type="scientific">Bacillus subtilis (strain 168)</name>
    <dbReference type="NCBI Taxonomy" id="224308"/>
    <lineage>
        <taxon>Bacteria</taxon>
        <taxon>Bacillati</taxon>
        <taxon>Bacillota</taxon>
        <taxon>Bacilli</taxon>
        <taxon>Bacillales</taxon>
        <taxon>Bacillaceae</taxon>
        <taxon>Bacillus</taxon>
    </lineage>
</organism>
<name>YOYJ_BACSU</name>
<sequence length="83" mass="9957">MNFSFSSYPYYNMIKHIANMKRFSLWFTHITFIGLFLMFQLIKDYFSSEGQALINTIFVVTCIIAILLWIIYCVFLKLRNKSH</sequence>